<comment type="function">
    <text evidence="2">Binds the chemical odorant 2-isobutyl-3-methoxypyrazine.</text>
</comment>
<comment type="subunit">
    <text evidence="6">May form a heterodimer with OBP1A.</text>
</comment>
<comment type="subcellular location">
    <subcellularLocation>
        <location evidence="5">Secreted</location>
    </subcellularLocation>
</comment>
<comment type="tissue specificity">
    <text evidence="2 3">Expressed in nasal mucosa (at protein level) (PubMed:8529023). Specifically detected in septal and lateral nasal glands (PubMed:9661663).</text>
</comment>
<comment type="PTM">
    <text evidence="2">The N-terminus may be blocked.</text>
</comment>
<comment type="similarity">
    <text evidence="5">Belongs to the calycin superfamily. Lipocalin family.</text>
</comment>
<dbReference type="EMBL" id="AL671961">
    <property type="status" value="NOT_ANNOTATED_CDS"/>
    <property type="molecule type" value="Genomic_DNA"/>
</dbReference>
<dbReference type="EMBL" id="BX571702">
    <property type="status" value="NOT_ANNOTATED_CDS"/>
    <property type="molecule type" value="Genomic_DNA"/>
</dbReference>
<dbReference type="EMBL" id="Y10972">
    <property type="protein sequence ID" value="CAA71868.1"/>
    <property type="molecule type" value="Genomic_DNA"/>
</dbReference>
<dbReference type="CCDS" id="CCDS81146.1"/>
<dbReference type="RefSeq" id="NP_001297257.1">
    <property type="nucleotide sequence ID" value="NM_001310328.1"/>
</dbReference>
<dbReference type="SMR" id="A2AEP0"/>
<dbReference type="FunCoup" id="A2AEP0">
    <property type="interactions" value="46"/>
</dbReference>
<dbReference type="STRING" id="10090.ENSMUSP00000085528"/>
<dbReference type="PaxDb" id="10090-ENSMUSP00000085528"/>
<dbReference type="PeptideAtlas" id="A2AEP0"/>
<dbReference type="ProteomicsDB" id="294056"/>
<dbReference type="Ensembl" id="ENSMUST00000088198.4">
    <property type="protein sequence ID" value="ENSMUSP00000085528.4"/>
    <property type="gene ID" value="ENSMUSG00000067679.4"/>
</dbReference>
<dbReference type="GeneID" id="628991"/>
<dbReference type="KEGG" id="mmu:628991"/>
<dbReference type="UCSC" id="uc057asa.1">
    <property type="organism name" value="mouse"/>
</dbReference>
<dbReference type="AGR" id="MGI:1277948"/>
<dbReference type="CTD" id="628991"/>
<dbReference type="MGI" id="MGI:1277948">
    <property type="gene designation" value="Obp1b"/>
</dbReference>
<dbReference type="VEuPathDB" id="HostDB:ENSMUSG00000067679"/>
<dbReference type="eggNOG" id="ENOG502TDZD">
    <property type="taxonomic scope" value="Eukaryota"/>
</dbReference>
<dbReference type="GeneTree" id="ENSGT01050000244868"/>
<dbReference type="HOGENOM" id="CLU_094061_4_2_1"/>
<dbReference type="InParanoid" id="A2AEP0"/>
<dbReference type="OMA" id="CINDCKY"/>
<dbReference type="OrthoDB" id="9630146at2759"/>
<dbReference type="PhylomeDB" id="A2AEP0"/>
<dbReference type="TreeFam" id="TF338197"/>
<dbReference type="BioGRID-ORCS" id="628991">
    <property type="hits" value="0 hits in 5 CRISPR screens"/>
</dbReference>
<dbReference type="PRO" id="PR:A2AEP0"/>
<dbReference type="Proteomes" id="UP000000589">
    <property type="component" value="Chromosome X"/>
</dbReference>
<dbReference type="RNAct" id="A2AEP0">
    <property type="molecule type" value="protein"/>
</dbReference>
<dbReference type="GO" id="GO:0005576">
    <property type="term" value="C:extracellular region"/>
    <property type="evidence" value="ECO:0007669"/>
    <property type="project" value="UniProtKB-SubCell"/>
</dbReference>
<dbReference type="GO" id="GO:0036094">
    <property type="term" value="F:small molecule binding"/>
    <property type="evidence" value="ECO:0007669"/>
    <property type="project" value="InterPro"/>
</dbReference>
<dbReference type="GO" id="GO:0007608">
    <property type="term" value="P:sensory perception of smell"/>
    <property type="evidence" value="ECO:0007669"/>
    <property type="project" value="UniProtKB-KW"/>
</dbReference>
<dbReference type="CDD" id="cd19427">
    <property type="entry name" value="lipocalin_OBP-like"/>
    <property type="match status" value="1"/>
</dbReference>
<dbReference type="Gene3D" id="2.40.128.20">
    <property type="match status" value="1"/>
</dbReference>
<dbReference type="InterPro" id="IPR012674">
    <property type="entry name" value="Calycin"/>
</dbReference>
<dbReference type="InterPro" id="IPR002345">
    <property type="entry name" value="Lipocalin"/>
</dbReference>
<dbReference type="InterPro" id="IPR000566">
    <property type="entry name" value="Lipocln_cytosolic_FA-bd_dom"/>
</dbReference>
<dbReference type="InterPro" id="IPR002448">
    <property type="entry name" value="OBP-like"/>
</dbReference>
<dbReference type="PANTHER" id="PTHR11430">
    <property type="entry name" value="LIPOCALIN"/>
    <property type="match status" value="1"/>
</dbReference>
<dbReference type="PANTHER" id="PTHR11430:SF65">
    <property type="entry name" value="ODORANT-BINDING PROTEIN 1A-RELATED"/>
    <property type="match status" value="1"/>
</dbReference>
<dbReference type="Pfam" id="PF00061">
    <property type="entry name" value="Lipocalin"/>
    <property type="match status" value="1"/>
</dbReference>
<dbReference type="PRINTS" id="PR01173">
    <property type="entry name" value="ODORANTBNDNG"/>
</dbReference>
<dbReference type="SUPFAM" id="SSF50814">
    <property type="entry name" value="Lipocalins"/>
    <property type="match status" value="1"/>
</dbReference>
<reference evidence="8" key="1">
    <citation type="journal article" date="2009" name="PLoS Biol.">
        <title>Lineage-specific biology revealed by a finished genome assembly of the mouse.</title>
        <authorList>
            <person name="Church D.M."/>
            <person name="Goodstadt L."/>
            <person name="Hillier L.W."/>
            <person name="Zody M.C."/>
            <person name="Goldstein S."/>
            <person name="She X."/>
            <person name="Bult C.J."/>
            <person name="Agarwala R."/>
            <person name="Cherry J.L."/>
            <person name="DiCuccio M."/>
            <person name="Hlavina W."/>
            <person name="Kapustin Y."/>
            <person name="Meric P."/>
            <person name="Maglott D."/>
            <person name="Birtle Z."/>
            <person name="Marques A.C."/>
            <person name="Graves T."/>
            <person name="Zhou S."/>
            <person name="Teague B."/>
            <person name="Potamousis K."/>
            <person name="Churas C."/>
            <person name="Place M."/>
            <person name="Herschleb J."/>
            <person name="Runnheim R."/>
            <person name="Forrest D."/>
            <person name="Amos-Landgraf J."/>
            <person name="Schwartz D.C."/>
            <person name="Cheng Z."/>
            <person name="Lindblad-Toh K."/>
            <person name="Eichler E.E."/>
            <person name="Ponting C.P."/>
        </authorList>
    </citation>
    <scope>NUCLEOTIDE SEQUENCE [LARGE SCALE GENOMIC DNA]</scope>
    <source>
        <strain evidence="8">C57BL/6J</strain>
    </source>
</reference>
<reference evidence="7" key="2">
    <citation type="journal article" date="1998" name="Gene">
        <title>Cloning and expression of odorant-binding proteins Ia and Ib from mouse nasal tissue.</title>
        <authorList>
            <person name="Pes D."/>
            <person name="Mameli M."/>
            <person name="Andreini I."/>
            <person name="Krieger J."/>
            <person name="Weber M."/>
            <person name="Breer H."/>
            <person name="Pelosi P."/>
        </authorList>
    </citation>
    <scope>NUCLEOTIDE SEQUENCE [GENOMIC DNA] OF 26-171</scope>
    <source>
        <tissue evidence="7">Nasal mucosa</tissue>
    </source>
</reference>
<reference evidence="5" key="3">
    <citation type="journal article" date="1995" name="Comp. Biochem. Physiol.">
        <title>Odorant-binding proteins of the mouse.</title>
        <authorList>
            <person name="Pes D."/>
            <person name="Pelosi P."/>
        </authorList>
    </citation>
    <scope>PROTEIN SEQUENCE OF 20-43</scope>
    <scope>FUNCTION</scope>
    <scope>TISSUE SPECIFICITY</scope>
    <scope>BLOCKAGE OF N-TERMINUS</scope>
</reference>
<proteinExistence type="evidence at protein level"/>
<evidence type="ECO:0000250" key="1">
    <source>
        <dbReference type="UniProtKB" id="P08937"/>
    </source>
</evidence>
<evidence type="ECO:0000269" key="2">
    <source>
    </source>
</evidence>
<evidence type="ECO:0000269" key="3">
    <source>
    </source>
</evidence>
<evidence type="ECO:0000303" key="4">
    <source>
    </source>
</evidence>
<evidence type="ECO:0000305" key="5"/>
<evidence type="ECO:0000305" key="6">
    <source>
    </source>
</evidence>
<evidence type="ECO:0000312" key="7">
    <source>
        <dbReference type="EMBL" id="CAA71868.1"/>
    </source>
</evidence>
<evidence type="ECO:0000312" key="8">
    <source>
        <dbReference type="Proteomes" id="UP000000589"/>
    </source>
</evidence>
<name>OBP1B_MOUSE</name>
<sequence>MMVKFLLLALVFGLAHVHAHDHPELQGQWKTTAIMADNIDKIETSGPLELFVREITCDEGCQKMKVTFYVKQNGQCSLTTVTGYKQEDGKTFKNQYEGENNYKLLKATSENLVFYDENVDRASRKTKLLYILGKGEALTHEQKERLTELATQKGIPAGNLRELAHEDTCPE</sequence>
<organism evidence="8">
    <name type="scientific">Mus musculus</name>
    <name type="common">Mouse</name>
    <dbReference type="NCBI Taxonomy" id="10090"/>
    <lineage>
        <taxon>Eukaryota</taxon>
        <taxon>Metazoa</taxon>
        <taxon>Chordata</taxon>
        <taxon>Craniata</taxon>
        <taxon>Vertebrata</taxon>
        <taxon>Euteleostomi</taxon>
        <taxon>Mammalia</taxon>
        <taxon>Eutheria</taxon>
        <taxon>Euarchontoglires</taxon>
        <taxon>Glires</taxon>
        <taxon>Rodentia</taxon>
        <taxon>Myomorpha</taxon>
        <taxon>Muroidea</taxon>
        <taxon>Muridae</taxon>
        <taxon>Murinae</taxon>
        <taxon>Mus</taxon>
        <taxon>Mus</taxon>
    </lineage>
</organism>
<keyword id="KW-0903">Direct protein sequencing</keyword>
<keyword id="KW-1015">Disulfide bond</keyword>
<keyword id="KW-0552">Olfaction</keyword>
<keyword id="KW-1185">Reference proteome</keyword>
<keyword id="KW-0964">Secreted</keyword>
<keyword id="KW-0716">Sensory transduction</keyword>
<keyword id="KW-0732">Signal</keyword>
<keyword id="KW-0813">Transport</keyword>
<feature type="signal peptide" evidence="2">
    <location>
        <begin position="1"/>
        <end position="19"/>
    </location>
</feature>
<feature type="chain" id="PRO_5002642467" description="Odorant-binding protein 1b">
    <location>
        <begin position="20"/>
        <end position="171"/>
    </location>
</feature>
<feature type="disulfide bond" evidence="1">
    <location>
        <begin position="57"/>
        <end position="61"/>
    </location>
</feature>
<feature type="disulfide bond" evidence="1">
    <location>
        <begin position="76"/>
        <end position="169"/>
    </location>
</feature>
<gene>
    <name evidence="4" type="primary">Obp1b</name>
</gene>
<accession>A2AEP0</accession>
<accession>P97337</accession>
<protein>
    <recommendedName>
        <fullName evidence="5">Odorant-binding protein 1b</fullName>
    </recommendedName>
    <alternativeName>
        <fullName evidence="4">Odorant-binding protein IB</fullName>
    </alternativeName>
</protein>